<evidence type="ECO:0000255" key="1">
    <source>
        <dbReference type="HAMAP-Rule" id="MF_04067"/>
    </source>
</evidence>
<sequence>MDSNTVSSFQDILMRMSKMQLGSSSEDLNGMIIRLESLKLYRDSLGEAVMRMGDLHSLQSRNEKWREQLSQKFEEIRWLIEEVRHRLKNTENSFEQITFMQALQLLLEVEQEIRTFSFQLI</sequence>
<organismHost>
    <name type="scientific">Aves</name>
    <dbReference type="NCBI Taxonomy" id="8782"/>
</organismHost>
<organismHost>
    <name type="scientific">Equus caballus</name>
    <name type="common">Horse</name>
    <dbReference type="NCBI Taxonomy" id="9796"/>
</organismHost>
<reference key="1">
    <citation type="journal article" date="1998" name="Arch. Virol.">
        <title>Phylogenetic analyses of the matrix and non-structural genes of equine influenza viruses.</title>
        <authorList>
            <person name="Lindstrom S."/>
            <person name="Endo A."/>
            <person name="Sugita S."/>
            <person name="Pecoraro M."/>
            <person name="Hiromoto Y."/>
            <person name="Kamada M."/>
            <person name="Takahashi T."/>
            <person name="Nerome K."/>
        </authorList>
    </citation>
    <scope>NUCLEOTIDE SEQUENCE [GENOMIC RNA]</scope>
</reference>
<name>NEP_I91A0</name>
<gene>
    <name evidence="1" type="primary">NS</name>
</gene>
<proteinExistence type="inferred from homology"/>
<protein>
    <recommendedName>
        <fullName evidence="1">Nuclear export protein</fullName>
        <shortName evidence="1">NEP</shortName>
    </recommendedName>
    <alternativeName>
        <fullName evidence="1">Non-structural protein 2</fullName>
        <shortName evidence="1">NS2</shortName>
    </alternativeName>
</protein>
<comment type="function">
    <text evidence="1">Mediates the nuclear export of encapsidated genomic RNAs (ribonucleoproteins, RNPs). Acts as an adapter between viral RNPs complexes and the nuclear export machinery of the cell. Possesses no intrinsic RNA-binding activity, but includes a C-terminal M1-binding domain. This domain is believed to allow recognition of RNPs bound to the protein M1. Since protein M1 is not available in large quantities before late stages of infection, such an indirect recognition mechanism probably ensures that genomic RNPs are not exported from the host nucleus until sufficient quantities of viral mRNA and progeny genomic RNA have been synthesized. Furthermore, the RNPs enter the host cytoplasm only when associated with the M1 protein that is necessary to guide them to the plasma membrane. May down-regulate viral RNA synthesis when overproduced.</text>
</comment>
<comment type="subunit">
    <text evidence="1">Interacts with protein M1. May interact with host nucleoporin RAB/HRB and exportin XPO1/CRM1.</text>
</comment>
<comment type="subcellular location">
    <subcellularLocation>
        <location evidence="1">Virion</location>
    </subcellularLocation>
    <subcellularLocation>
        <location evidence="1">Host nucleus</location>
    </subcellularLocation>
</comment>
<comment type="alternative products">
    <event type="alternative splicing"/>
    <isoform>
        <id>Q77ZM4-1</id>
        <name>NEP</name>
        <name>NS2</name>
        <sequence type="displayed"/>
    </isoform>
    <isoform>
        <id>Q77ZM3-1</id>
        <name>NS1</name>
        <sequence type="external"/>
    </isoform>
</comment>
<comment type="similarity">
    <text evidence="1">Belongs to the influenza viruses NEP family.</text>
</comment>
<feature type="chain" id="PRO_0000324233" description="Nuclear export protein">
    <location>
        <begin position="1"/>
        <end position="121"/>
    </location>
</feature>
<feature type="short sequence motif" description="Nuclear export signal" evidence="1">
    <location>
        <begin position="12"/>
        <end position="21"/>
    </location>
</feature>
<feature type="short sequence motif" description="Nuclear export signal" evidence="1">
    <location>
        <begin position="85"/>
        <end position="94"/>
    </location>
</feature>
<dbReference type="EMBL" id="AF001667">
    <property type="protein sequence ID" value="AAC31259.1"/>
    <property type="molecule type" value="Genomic_RNA"/>
</dbReference>
<dbReference type="SMR" id="Q77ZM4"/>
<dbReference type="GO" id="GO:0042025">
    <property type="term" value="C:host cell nucleus"/>
    <property type="evidence" value="ECO:0007669"/>
    <property type="project" value="UniProtKB-SubCell"/>
</dbReference>
<dbReference type="GO" id="GO:0044423">
    <property type="term" value="C:virion component"/>
    <property type="evidence" value="ECO:0007669"/>
    <property type="project" value="UniProtKB-UniRule"/>
</dbReference>
<dbReference type="GO" id="GO:0039675">
    <property type="term" value="P:exit of virus from host cell nucleus through nuclear pore"/>
    <property type="evidence" value="ECO:0007669"/>
    <property type="project" value="UniProtKB-UniRule"/>
</dbReference>
<dbReference type="Gene3D" id="1.10.287.230">
    <property type="match status" value="1"/>
</dbReference>
<dbReference type="HAMAP" id="MF_04067">
    <property type="entry name" value="INFV_NEP"/>
    <property type="match status" value="1"/>
</dbReference>
<dbReference type="InterPro" id="IPR000968">
    <property type="entry name" value="Flu_NS2"/>
</dbReference>
<dbReference type="Pfam" id="PF00601">
    <property type="entry name" value="Flu_NS2"/>
    <property type="match status" value="1"/>
</dbReference>
<dbReference type="SUPFAM" id="SSF101156">
    <property type="entry name" value="Nonstructural protein ns2, Nep, M1-binding domain"/>
    <property type="match status" value="1"/>
</dbReference>
<accession>Q77ZM4</accession>
<keyword id="KW-0025">Alternative splicing</keyword>
<keyword id="KW-1048">Host nucleus</keyword>
<keyword id="KW-0945">Host-virus interaction</keyword>
<keyword id="KW-0813">Transport</keyword>
<keyword id="KW-0946">Virion</keyword>
<organism>
    <name type="scientific">Influenza A virus (strain A/Equine/Alaska/1/1991 H3N8)</name>
    <dbReference type="NCBI Taxonomy" id="387213"/>
    <lineage>
        <taxon>Viruses</taxon>
        <taxon>Riboviria</taxon>
        <taxon>Orthornavirae</taxon>
        <taxon>Negarnaviricota</taxon>
        <taxon>Polyploviricotina</taxon>
        <taxon>Insthoviricetes</taxon>
        <taxon>Articulavirales</taxon>
        <taxon>Orthomyxoviridae</taxon>
        <taxon>Alphainfluenzavirus</taxon>
        <taxon>Alphainfluenzavirus influenzae</taxon>
        <taxon>Influenza A virus</taxon>
    </lineage>
</organism>